<keyword id="KW-0012">Acyltransferase</keyword>
<keyword id="KW-0808">Transferase</keyword>
<feature type="chain" id="PRO_1000083942" description="Uncharacterized N-acetyltransferase BPUM_1403">
    <location>
        <begin position="1"/>
        <end position="159"/>
    </location>
</feature>
<feature type="domain" description="N-acetyltransferase" evidence="1">
    <location>
        <begin position="7"/>
        <end position="151"/>
    </location>
</feature>
<organism>
    <name type="scientific">Bacillus pumilus (strain SAFR-032)</name>
    <dbReference type="NCBI Taxonomy" id="315750"/>
    <lineage>
        <taxon>Bacteria</taxon>
        <taxon>Bacillati</taxon>
        <taxon>Bacillota</taxon>
        <taxon>Bacilli</taxon>
        <taxon>Bacillales</taxon>
        <taxon>Bacillaceae</taxon>
        <taxon>Bacillus</taxon>
    </lineage>
</organism>
<reference key="1">
    <citation type="journal article" date="2007" name="PLoS ONE">
        <title>Paradoxical DNA repair and peroxide resistance gene conservation in Bacillus pumilus SAFR-032.</title>
        <authorList>
            <person name="Gioia J."/>
            <person name="Yerrapragada S."/>
            <person name="Qin X."/>
            <person name="Jiang H."/>
            <person name="Igboeli O.C."/>
            <person name="Muzny D."/>
            <person name="Dugan-Rocha S."/>
            <person name="Ding Y."/>
            <person name="Hawes A."/>
            <person name="Liu W."/>
            <person name="Perez L."/>
            <person name="Kovar C."/>
            <person name="Dinh H."/>
            <person name="Lee S."/>
            <person name="Nazareth L."/>
            <person name="Blyth P."/>
            <person name="Holder M."/>
            <person name="Buhay C."/>
            <person name="Tirumalai M.R."/>
            <person name="Liu Y."/>
            <person name="Dasgupta I."/>
            <person name="Bokhetache L."/>
            <person name="Fujita M."/>
            <person name="Karouia F."/>
            <person name="Eswara Moorthy P."/>
            <person name="Siefert J."/>
            <person name="Uzman A."/>
            <person name="Buzumbo P."/>
            <person name="Verma A."/>
            <person name="Zwiya H."/>
            <person name="McWilliams B.D."/>
            <person name="Olowu A."/>
            <person name="Clinkenbeard K.D."/>
            <person name="Newcombe D."/>
            <person name="Golebiewski L."/>
            <person name="Petrosino J.F."/>
            <person name="Nicholson W.L."/>
            <person name="Fox G.E."/>
            <person name="Venkateswaran K."/>
            <person name="Highlander S.K."/>
            <person name="Weinstock G.M."/>
        </authorList>
    </citation>
    <scope>NUCLEOTIDE SEQUENCE [LARGE SCALE GENOMIC DNA]</scope>
    <source>
        <strain>SAFR-032</strain>
    </source>
</reference>
<dbReference type="EC" id="2.3.1.-" evidence="1"/>
<dbReference type="EMBL" id="CP000813">
    <property type="protein sequence ID" value="ABV62086.1"/>
    <property type="molecule type" value="Genomic_DNA"/>
</dbReference>
<dbReference type="RefSeq" id="WP_012009859.1">
    <property type="nucleotide sequence ID" value="NC_009848.4"/>
</dbReference>
<dbReference type="SMR" id="A8FCW9"/>
<dbReference type="STRING" id="315750.BPUM_1403"/>
<dbReference type="GeneID" id="5620666"/>
<dbReference type="KEGG" id="bpu:BPUM_1403"/>
<dbReference type="eggNOG" id="COG0454">
    <property type="taxonomic scope" value="Bacteria"/>
</dbReference>
<dbReference type="HOGENOM" id="CLU_136634_0_0_9"/>
<dbReference type="OrthoDB" id="2242710at2"/>
<dbReference type="Proteomes" id="UP000001355">
    <property type="component" value="Chromosome"/>
</dbReference>
<dbReference type="GO" id="GO:0016747">
    <property type="term" value="F:acyltransferase activity, transferring groups other than amino-acyl groups"/>
    <property type="evidence" value="ECO:0007669"/>
    <property type="project" value="UniProtKB-UniRule"/>
</dbReference>
<dbReference type="CDD" id="cd04301">
    <property type="entry name" value="NAT_SF"/>
    <property type="match status" value="1"/>
</dbReference>
<dbReference type="Gene3D" id="3.40.630.30">
    <property type="match status" value="1"/>
</dbReference>
<dbReference type="HAMAP" id="MF_00824">
    <property type="entry name" value="Acetyltransf_YlbP"/>
    <property type="match status" value="1"/>
</dbReference>
<dbReference type="InterPro" id="IPR016181">
    <property type="entry name" value="Acyl_CoA_acyltransferase"/>
</dbReference>
<dbReference type="InterPro" id="IPR000182">
    <property type="entry name" value="GNAT_dom"/>
</dbReference>
<dbReference type="InterPro" id="IPR017274">
    <property type="entry name" value="YlbP"/>
</dbReference>
<dbReference type="NCBIfam" id="NF010241">
    <property type="entry name" value="PRK13688.1"/>
    <property type="match status" value="1"/>
</dbReference>
<dbReference type="Pfam" id="PF00583">
    <property type="entry name" value="Acetyltransf_1"/>
    <property type="match status" value="1"/>
</dbReference>
<dbReference type="PIRSF" id="PIRSF037732">
    <property type="entry name" value="YlbP_prd"/>
    <property type="match status" value="1"/>
</dbReference>
<dbReference type="SUPFAM" id="SSF55729">
    <property type="entry name" value="Acyl-CoA N-acyltransferases (Nat)"/>
    <property type="match status" value="1"/>
</dbReference>
<dbReference type="PROSITE" id="PS51186">
    <property type="entry name" value="GNAT"/>
    <property type="match status" value="1"/>
</dbReference>
<protein>
    <recommendedName>
        <fullName evidence="1">Uncharacterized N-acetyltransferase BPUM_1403</fullName>
        <ecNumber evidence="1">2.3.1.-</ecNumber>
    </recommendedName>
</protein>
<accession>A8FCW9</accession>
<sequence>MAQVKRLLINYKTLEEFKQFKEYGIQELSMLEDLESNMIENDSNSPFYGIYFGDKLVARMSLYQVDGSTTTYFNHNHDYLELWKLEVLPGYQRKGYGEALVEFAKSFGLPIRTNPRVKSAGFWDKMGFESVKYDMERDKGENPLIWEPAHIQKNTGESA</sequence>
<evidence type="ECO:0000255" key="1">
    <source>
        <dbReference type="HAMAP-Rule" id="MF_00824"/>
    </source>
</evidence>
<name>Y1403_BACP2</name>
<proteinExistence type="inferred from homology"/>
<gene>
    <name type="ordered locus">BPUM_1403</name>
</gene>